<proteinExistence type="inferred from homology"/>
<feature type="chain" id="PRO_1000129652" description="Co-chaperonin GroES">
    <location>
        <begin position="1"/>
        <end position="97"/>
    </location>
</feature>
<comment type="function">
    <text evidence="1">Together with the chaperonin GroEL, plays an essential role in assisting protein folding. The GroEL-GroES system forms a nano-cage that allows encapsulation of the non-native substrate proteins and provides a physical environment optimized to promote and accelerate protein folding. GroES binds to the apical surface of the GroEL ring, thereby capping the opening of the GroEL channel.</text>
</comment>
<comment type="subunit">
    <text evidence="1">Heptamer of 7 subunits arranged in a ring. Interacts with the chaperonin GroEL.</text>
</comment>
<comment type="subcellular location">
    <subcellularLocation>
        <location evidence="1">Cytoplasm</location>
    </subcellularLocation>
</comment>
<comment type="similarity">
    <text evidence="1">Belongs to the GroES chaperonin family.</text>
</comment>
<protein>
    <recommendedName>
        <fullName evidence="1">Co-chaperonin GroES</fullName>
    </recommendedName>
    <alternativeName>
        <fullName evidence="1">10 kDa chaperonin</fullName>
    </alternativeName>
    <alternativeName>
        <fullName evidence="1">Chaperonin-10</fullName>
        <shortName evidence="1">Cpn10</shortName>
    </alternativeName>
</protein>
<dbReference type="EMBL" id="CP001164">
    <property type="protein sequence ID" value="ACI38724.1"/>
    <property type="molecule type" value="Genomic_DNA"/>
</dbReference>
<dbReference type="RefSeq" id="WP_001026276.1">
    <property type="nucleotide sequence ID" value="NC_011353.1"/>
</dbReference>
<dbReference type="SMR" id="B5Z2F1"/>
<dbReference type="KEGG" id="ecf:ECH74115_5658"/>
<dbReference type="HOGENOM" id="CLU_132825_1_1_6"/>
<dbReference type="GO" id="GO:0005737">
    <property type="term" value="C:cytoplasm"/>
    <property type="evidence" value="ECO:0007669"/>
    <property type="project" value="UniProtKB-SubCell"/>
</dbReference>
<dbReference type="GO" id="GO:0005524">
    <property type="term" value="F:ATP binding"/>
    <property type="evidence" value="ECO:0007669"/>
    <property type="project" value="InterPro"/>
</dbReference>
<dbReference type="GO" id="GO:0046872">
    <property type="term" value="F:metal ion binding"/>
    <property type="evidence" value="ECO:0007669"/>
    <property type="project" value="TreeGrafter"/>
</dbReference>
<dbReference type="GO" id="GO:0044183">
    <property type="term" value="F:protein folding chaperone"/>
    <property type="evidence" value="ECO:0007669"/>
    <property type="project" value="InterPro"/>
</dbReference>
<dbReference type="GO" id="GO:0051087">
    <property type="term" value="F:protein-folding chaperone binding"/>
    <property type="evidence" value="ECO:0007669"/>
    <property type="project" value="TreeGrafter"/>
</dbReference>
<dbReference type="GO" id="GO:0051082">
    <property type="term" value="F:unfolded protein binding"/>
    <property type="evidence" value="ECO:0007669"/>
    <property type="project" value="TreeGrafter"/>
</dbReference>
<dbReference type="GO" id="GO:0051085">
    <property type="term" value="P:chaperone cofactor-dependent protein refolding"/>
    <property type="evidence" value="ECO:0007669"/>
    <property type="project" value="TreeGrafter"/>
</dbReference>
<dbReference type="CDD" id="cd00320">
    <property type="entry name" value="cpn10"/>
    <property type="match status" value="1"/>
</dbReference>
<dbReference type="FunFam" id="2.30.33.40:FF:000001">
    <property type="entry name" value="10 kDa chaperonin"/>
    <property type="match status" value="1"/>
</dbReference>
<dbReference type="Gene3D" id="2.30.33.40">
    <property type="entry name" value="GroES chaperonin"/>
    <property type="match status" value="1"/>
</dbReference>
<dbReference type="HAMAP" id="MF_00580">
    <property type="entry name" value="CH10"/>
    <property type="match status" value="1"/>
</dbReference>
<dbReference type="InterPro" id="IPR020818">
    <property type="entry name" value="Chaperonin_GroES"/>
</dbReference>
<dbReference type="InterPro" id="IPR037124">
    <property type="entry name" value="Chaperonin_GroES_sf"/>
</dbReference>
<dbReference type="InterPro" id="IPR018369">
    <property type="entry name" value="Chaprnonin_Cpn10_CS"/>
</dbReference>
<dbReference type="InterPro" id="IPR011032">
    <property type="entry name" value="GroES-like_sf"/>
</dbReference>
<dbReference type="NCBIfam" id="NF001526">
    <property type="entry name" value="PRK00364.1-1"/>
    <property type="match status" value="1"/>
</dbReference>
<dbReference type="NCBIfam" id="NF001527">
    <property type="entry name" value="PRK00364.1-2"/>
    <property type="match status" value="1"/>
</dbReference>
<dbReference type="NCBIfam" id="NF001531">
    <property type="entry name" value="PRK00364.2-2"/>
    <property type="match status" value="1"/>
</dbReference>
<dbReference type="PANTHER" id="PTHR10772">
    <property type="entry name" value="10 KDA HEAT SHOCK PROTEIN"/>
    <property type="match status" value="1"/>
</dbReference>
<dbReference type="PANTHER" id="PTHR10772:SF58">
    <property type="entry name" value="CO-CHAPERONIN GROES"/>
    <property type="match status" value="1"/>
</dbReference>
<dbReference type="Pfam" id="PF00166">
    <property type="entry name" value="Cpn10"/>
    <property type="match status" value="1"/>
</dbReference>
<dbReference type="PRINTS" id="PR00297">
    <property type="entry name" value="CHAPERONIN10"/>
</dbReference>
<dbReference type="SMART" id="SM00883">
    <property type="entry name" value="Cpn10"/>
    <property type="match status" value="1"/>
</dbReference>
<dbReference type="SUPFAM" id="SSF50129">
    <property type="entry name" value="GroES-like"/>
    <property type="match status" value="1"/>
</dbReference>
<dbReference type="PROSITE" id="PS00681">
    <property type="entry name" value="CHAPERONINS_CPN10"/>
    <property type="match status" value="1"/>
</dbReference>
<gene>
    <name evidence="1" type="primary">groES</name>
    <name evidence="1" type="synonym">groS</name>
    <name type="ordered locus">ECH74115_5658</name>
</gene>
<name>CH10_ECO5E</name>
<evidence type="ECO:0000255" key="1">
    <source>
        <dbReference type="HAMAP-Rule" id="MF_00580"/>
    </source>
</evidence>
<organism>
    <name type="scientific">Escherichia coli O157:H7 (strain EC4115 / EHEC)</name>
    <dbReference type="NCBI Taxonomy" id="444450"/>
    <lineage>
        <taxon>Bacteria</taxon>
        <taxon>Pseudomonadati</taxon>
        <taxon>Pseudomonadota</taxon>
        <taxon>Gammaproteobacteria</taxon>
        <taxon>Enterobacterales</taxon>
        <taxon>Enterobacteriaceae</taxon>
        <taxon>Escherichia</taxon>
    </lineage>
</organism>
<keyword id="KW-0143">Chaperone</keyword>
<keyword id="KW-0963">Cytoplasm</keyword>
<sequence length="97" mass="10387">MNIRPLHDRVIVKRKEVETKSAGGIVLTGSAAAKSTRGEVLAVGNGRILENGEVKPLDVKVGDIVIFNDGYGVKSEKIDNEEVLIMSESDILAIVEA</sequence>
<accession>B5Z2F1</accession>
<reference key="1">
    <citation type="journal article" date="2011" name="Proc. Natl. Acad. Sci. U.S.A.">
        <title>Genomic anatomy of Escherichia coli O157:H7 outbreaks.</title>
        <authorList>
            <person name="Eppinger M."/>
            <person name="Mammel M.K."/>
            <person name="Leclerc J.E."/>
            <person name="Ravel J."/>
            <person name="Cebula T.A."/>
        </authorList>
    </citation>
    <scope>NUCLEOTIDE SEQUENCE [LARGE SCALE GENOMIC DNA]</scope>
    <source>
        <strain>EC4115 / EHEC</strain>
    </source>
</reference>